<proteinExistence type="evidence at protein level"/>
<feature type="signal peptide" evidence="2">
    <location>
        <begin position="1"/>
        <end position="29"/>
    </location>
</feature>
<feature type="chain" id="PRO_0000438298" description="Autotransporter adhesin BtaF">
    <location>
        <begin position="30"/>
        <end position="278"/>
    </location>
</feature>
<feature type="region of interest" description="Surface exposed passenger domain" evidence="1">
    <location>
        <begin position="30"/>
        <end position="182"/>
    </location>
</feature>
<feature type="region of interest" description="Outer membrane translocation of the passenger domain" evidence="1">
    <location>
        <begin position="186"/>
        <end position="224"/>
    </location>
</feature>
<feature type="region of interest" description="Translocator domain" evidence="1">
    <location>
        <begin position="225"/>
        <end position="278"/>
    </location>
</feature>
<comment type="function">
    <text evidence="3">Participates in bacterial attachment to several surfaces, including various extracellular matrix (ECM) components and a hydrophobic abiotic surface. Involved in adhesion to host epithelial cells and is required for full virulence in mice. Also implicated in the resistance to porcine serum.</text>
</comment>
<comment type="subunit">
    <text evidence="1">Homotrimer.</text>
</comment>
<comment type="subcellular location">
    <subcellularLocation>
        <location evidence="3">Cell surface</location>
    </subcellularLocation>
    <subcellularLocation>
        <location evidence="1">Cell outer membrane</location>
    </subcellularLocation>
    <text evidence="1 3">The C-terminal translocator domain is localized in the outer membrane and the passenger domain is at the cell surface (By similarity). Localizes at the new cell pole generated after cell division (PubMed:24236157).</text>
</comment>
<comment type="domain">
    <text evidence="1">The signal peptide, cleaved at the inner membrane, guides the autotransporter protein to the periplasmic space. Then, insertion of the C-terminal translocator domain in the outer membrane forms a hydrophilic pore for the translocation of the passenger domain to the bacterial cell surface.</text>
</comment>
<comment type="disruption phenotype">
    <text evidence="3">Deletion mutant shows a significant decrease in the attachment to an abiotic surface and in the ability to bind collagen, hyaluronic acid and fetuin. Deletion leads to decreased adhesion to host cells, but it does not affect later stages of cellular infection. Splenic infection is significantly reduced in mice.</text>
</comment>
<comment type="similarity">
    <text evidence="5">Belongs to the autotransporter-2 (AT-2) (TC 1.B.40) family.</text>
</comment>
<dbReference type="EMBL" id="AE014291">
    <property type="protein sequence ID" value="AAN30741.1"/>
    <property type="molecule type" value="Genomic_DNA"/>
</dbReference>
<dbReference type="EMBL" id="CP002997">
    <property type="protein sequence ID" value="AEM19158.1"/>
    <property type="molecule type" value="Genomic_DNA"/>
</dbReference>
<dbReference type="SMR" id="A0A0H3G4K1"/>
<dbReference type="KEGG" id="bms:BR1846"/>
<dbReference type="KEGG" id="bsi:BS1330_I1840"/>
<dbReference type="HOGENOM" id="CLU_062782_0_0_5"/>
<dbReference type="Proteomes" id="UP000007104">
    <property type="component" value="Chromosome I"/>
</dbReference>
<dbReference type="GO" id="GO:0009279">
    <property type="term" value="C:cell outer membrane"/>
    <property type="evidence" value="ECO:0007669"/>
    <property type="project" value="UniProtKB-SubCell"/>
</dbReference>
<dbReference type="GO" id="GO:0009986">
    <property type="term" value="C:cell surface"/>
    <property type="evidence" value="ECO:0007669"/>
    <property type="project" value="UniProtKB-SubCell"/>
</dbReference>
<dbReference type="GO" id="GO:0007155">
    <property type="term" value="P:cell adhesion"/>
    <property type="evidence" value="ECO:0007669"/>
    <property type="project" value="UniProtKB-KW"/>
</dbReference>
<dbReference type="GO" id="GO:0015031">
    <property type="term" value="P:protein transport"/>
    <property type="evidence" value="ECO:0007669"/>
    <property type="project" value="UniProtKB-KW"/>
</dbReference>
<dbReference type="GO" id="GO:0042784">
    <property type="term" value="P:symbiont-mediated suppression of host complement activation"/>
    <property type="evidence" value="ECO:0000269"/>
    <property type="project" value="SigSci"/>
</dbReference>
<dbReference type="Gene3D" id="1.20.5.340">
    <property type="match status" value="1"/>
</dbReference>
<dbReference type="Gene3D" id="3.30.1300.30">
    <property type="entry name" value="GSPII I/J protein-like"/>
    <property type="match status" value="1"/>
</dbReference>
<dbReference type="InterPro" id="IPR045584">
    <property type="entry name" value="Pilin-like"/>
</dbReference>
<dbReference type="InterPro" id="IPR005594">
    <property type="entry name" value="YadA_C"/>
</dbReference>
<dbReference type="Pfam" id="PF03895">
    <property type="entry name" value="YadA_anchor"/>
    <property type="match status" value="1"/>
</dbReference>
<dbReference type="SUPFAM" id="SSF54523">
    <property type="entry name" value="Pili subunits"/>
    <property type="match status" value="1"/>
</dbReference>
<name>BTAF_BRUSU</name>
<evidence type="ECO:0000250" key="1">
    <source>
        <dbReference type="UniProtKB" id="P0C2W0"/>
    </source>
</evidence>
<evidence type="ECO:0000255" key="2"/>
<evidence type="ECO:0000269" key="3">
    <source>
    </source>
</evidence>
<evidence type="ECO:0000303" key="4">
    <source>
    </source>
</evidence>
<evidence type="ECO:0000305" key="5"/>
<evidence type="ECO:0000312" key="6">
    <source>
        <dbReference type="EMBL" id="AAN30741.1"/>
    </source>
</evidence>
<evidence type="ECO:0000312" key="7">
    <source>
        <dbReference type="EMBL" id="AEM19158.1"/>
    </source>
</evidence>
<keyword id="KW-0130">Cell adhesion</keyword>
<keyword id="KW-0998">Cell outer membrane</keyword>
<keyword id="KW-0472">Membrane</keyword>
<keyword id="KW-0653">Protein transport</keyword>
<keyword id="KW-0732">Signal</keyword>
<keyword id="KW-0812">Transmembrane</keyword>
<keyword id="KW-1134">Transmembrane beta strand</keyword>
<keyword id="KW-0813">Transport</keyword>
<keyword id="KW-0843">Virulence</keyword>
<organism>
    <name type="scientific">Brucella suis biovar 1 (strain 1330)</name>
    <dbReference type="NCBI Taxonomy" id="204722"/>
    <lineage>
        <taxon>Bacteria</taxon>
        <taxon>Pseudomonadati</taxon>
        <taxon>Pseudomonadota</taxon>
        <taxon>Alphaproteobacteria</taxon>
        <taxon>Hyphomicrobiales</taxon>
        <taxon>Brucellaceae</taxon>
        <taxon>Brucella/Ochrobactrum group</taxon>
        <taxon>Brucella</taxon>
    </lineage>
</organism>
<accession>A0A0H3G4K1</accession>
<protein>
    <recommendedName>
        <fullName evidence="5">Autotransporter adhesin BtaF</fullName>
    </recommendedName>
    <alternativeName>
        <fullName evidence="4">Brucella trimeric autotransporter</fullName>
    </alternativeName>
    <alternativeName>
        <fullName evidence="5">Type 5 secretion system autotransporter BtaF</fullName>
    </alternativeName>
</protein>
<reference key="1">
    <citation type="journal article" date="2002" name="Proc. Natl. Acad. Sci. U.S.A.">
        <title>The Brucella suis genome reveals fundamental similarities between animal and plant pathogens and symbionts.</title>
        <authorList>
            <person name="Paulsen I.T."/>
            <person name="Seshadri R."/>
            <person name="Nelson K.E."/>
            <person name="Eisen J.A."/>
            <person name="Heidelberg J.F."/>
            <person name="Read T.D."/>
            <person name="Dodson R.J."/>
            <person name="Umayam L.A."/>
            <person name="Brinkac L.M."/>
            <person name="Beanan M.J."/>
            <person name="Daugherty S.C."/>
            <person name="DeBoy R.T."/>
            <person name="Durkin A.S."/>
            <person name="Kolonay J.F."/>
            <person name="Madupu R."/>
            <person name="Nelson W.C."/>
            <person name="Ayodeji B."/>
            <person name="Kraul M."/>
            <person name="Shetty J."/>
            <person name="Malek J.A."/>
            <person name="Van Aken S.E."/>
            <person name="Riedmuller S."/>
            <person name="Tettelin H."/>
            <person name="Gill S.R."/>
            <person name="White O."/>
            <person name="Salzberg S.L."/>
            <person name="Hoover D.L."/>
            <person name="Lindler L.E."/>
            <person name="Halling S.M."/>
            <person name="Boyle S.M."/>
            <person name="Fraser C.M."/>
        </authorList>
    </citation>
    <scope>NUCLEOTIDE SEQUENCE [LARGE SCALE GENOMIC DNA]</scope>
    <source>
        <strain>1330</strain>
    </source>
</reference>
<reference key="2">
    <citation type="journal article" date="2011" name="J. Bacteriol.">
        <title>Revised genome sequence of Brucella suis 1330.</title>
        <authorList>
            <person name="Tae H."/>
            <person name="Shallom S."/>
            <person name="Settlage R."/>
            <person name="Preston D."/>
            <person name="Adams L.G."/>
            <person name="Garner H.R."/>
        </authorList>
    </citation>
    <scope>NUCLEOTIDE SEQUENCE [LARGE SCALE GENOMIC DNA]</scope>
    <source>
        <strain>1330</strain>
    </source>
</reference>
<reference key="3">
    <citation type="journal article" date="2013" name="PLoS ONE">
        <title>The BtaF trimeric autotransporter of Brucella suis is involved in attachment to various surfaces, resistance to serum and virulence.</title>
        <authorList>
            <person name="Ruiz-Ranwez V."/>
            <person name="Posadas D.M."/>
            <person name="Estein S.M."/>
            <person name="Abdian P.L."/>
            <person name="Martin F.A."/>
            <person name="Zorreguieta A."/>
        </authorList>
    </citation>
    <scope>FUNCTION AS AN ADHESIN</scope>
    <scope>SUBCELLULAR LOCATION</scope>
    <scope>DISRUPTION PHENOTYPE</scope>
</reference>
<sequence>MKLPPVFVFELVENQGLANIALIRPRVIAPDNNLRPGGIVSGIAGLLTLGQENRNLISENRQVINNNTTAIGQNSDRIDANAKGVADNRAAIGQNSGRIDANAKGVADNKAAIGRNSGRIDANAKGVADNKTAIGRNSGRIDTNAKGVADNRAAISQNRGRINANAAGVASNRAAIRQNSAAISALGQRVDGLQGQINSARKEARAGAANAAALSGLRYDNRPGKVSIATGVGGFKGSTALAAGIGYTSKNENARYNVSVAYNEAGTSWNAGASFTLN</sequence>
<gene>
    <name evidence="4" type="primary">btaF</name>
    <name evidence="6" type="ordered locus">BR1846</name>
    <name evidence="7" type="ordered locus">BS1330_I1840</name>
</gene>